<dbReference type="EC" id="6.1.1.3" evidence="2"/>
<dbReference type="EMBL" id="BC083914">
    <property type="protein sequence ID" value="AAH83914.1"/>
    <property type="molecule type" value="mRNA"/>
</dbReference>
<dbReference type="RefSeq" id="NP_001006977.1">
    <property type="nucleotide sequence ID" value="NM_001006976.2"/>
</dbReference>
<dbReference type="SMR" id="Q5XHY5"/>
<dbReference type="BioGRID" id="254808">
    <property type="interactions" value="1"/>
</dbReference>
<dbReference type="FunCoup" id="Q5XHY5">
    <property type="interactions" value="2969"/>
</dbReference>
<dbReference type="STRING" id="10116.ENSRNOP00000075146"/>
<dbReference type="GlyGen" id="Q5XHY5">
    <property type="glycosylation" value="1 site"/>
</dbReference>
<dbReference type="iPTMnet" id="Q5XHY5"/>
<dbReference type="PhosphoSitePlus" id="Q5XHY5"/>
<dbReference type="jPOST" id="Q5XHY5"/>
<dbReference type="PaxDb" id="10116-ENSRNOP00000044467"/>
<dbReference type="Ensembl" id="ENSRNOT00000051910.3">
    <property type="protein sequence ID" value="ENSRNOP00000044467.2"/>
    <property type="gene ID" value="ENSRNOG00000019023.7"/>
</dbReference>
<dbReference type="GeneID" id="294810"/>
<dbReference type="KEGG" id="rno:294810"/>
<dbReference type="AGR" id="RGD:1359527"/>
<dbReference type="CTD" id="6897"/>
<dbReference type="RGD" id="1359527">
    <property type="gene designation" value="Tars1"/>
</dbReference>
<dbReference type="eggNOG" id="KOG1637">
    <property type="taxonomic scope" value="Eukaryota"/>
</dbReference>
<dbReference type="GeneTree" id="ENSGT00940000154969"/>
<dbReference type="HOGENOM" id="CLU_008554_0_1_1"/>
<dbReference type="InParanoid" id="Q5XHY5"/>
<dbReference type="PRO" id="PR:Q5XHY5"/>
<dbReference type="Proteomes" id="UP000002494">
    <property type="component" value="Chromosome 2"/>
</dbReference>
<dbReference type="Bgee" id="ENSRNOG00000019023">
    <property type="expression patterns" value="Expressed in liver and 20 other cell types or tissues"/>
</dbReference>
<dbReference type="ExpressionAtlas" id="Q5XHY5">
    <property type="expression patterns" value="baseline and differential"/>
</dbReference>
<dbReference type="GO" id="GO:0005737">
    <property type="term" value="C:cytoplasm"/>
    <property type="evidence" value="ECO:0000250"/>
    <property type="project" value="UniProtKB"/>
</dbReference>
<dbReference type="GO" id="GO:0005739">
    <property type="term" value="C:mitochondrion"/>
    <property type="evidence" value="ECO:0000318"/>
    <property type="project" value="GO_Central"/>
</dbReference>
<dbReference type="GO" id="GO:0005524">
    <property type="term" value="F:ATP binding"/>
    <property type="evidence" value="ECO:0000266"/>
    <property type="project" value="RGD"/>
</dbReference>
<dbReference type="GO" id="GO:0042802">
    <property type="term" value="F:identical protein binding"/>
    <property type="evidence" value="ECO:0000266"/>
    <property type="project" value="RGD"/>
</dbReference>
<dbReference type="GO" id="GO:0004829">
    <property type="term" value="F:threonine-tRNA ligase activity"/>
    <property type="evidence" value="ECO:0000250"/>
    <property type="project" value="UniProtKB"/>
</dbReference>
<dbReference type="GO" id="GO:0008270">
    <property type="term" value="F:zinc ion binding"/>
    <property type="evidence" value="ECO:0000266"/>
    <property type="project" value="RGD"/>
</dbReference>
<dbReference type="GO" id="GO:0006435">
    <property type="term" value="P:threonyl-tRNA aminoacylation"/>
    <property type="evidence" value="ECO:0000250"/>
    <property type="project" value="UniProtKB"/>
</dbReference>
<dbReference type="CDD" id="cd01667">
    <property type="entry name" value="TGS_ThrRS"/>
    <property type="match status" value="1"/>
</dbReference>
<dbReference type="CDD" id="cd00860">
    <property type="entry name" value="ThrRS_anticodon"/>
    <property type="match status" value="1"/>
</dbReference>
<dbReference type="CDD" id="cd00771">
    <property type="entry name" value="ThrRS_core"/>
    <property type="match status" value="1"/>
</dbReference>
<dbReference type="FunFam" id="3.30.930.10:FF:000009">
    <property type="entry name" value="Threonine--tRNA ligase 2, cytoplasmic"/>
    <property type="match status" value="1"/>
</dbReference>
<dbReference type="FunFam" id="3.40.50.800:FF:000003">
    <property type="entry name" value="Threonine--tRNA ligase 2, cytoplasmic"/>
    <property type="match status" value="1"/>
</dbReference>
<dbReference type="FunFam" id="3.10.20.30:FF:000006">
    <property type="entry name" value="Threonine--tRNA ligase, cytoplasmic"/>
    <property type="match status" value="1"/>
</dbReference>
<dbReference type="FunFam" id="3.30.980.10:FF:000003">
    <property type="entry name" value="Threonine--tRNA ligase, cytoplasmic"/>
    <property type="match status" value="1"/>
</dbReference>
<dbReference type="Gene3D" id="3.10.20.30">
    <property type="match status" value="1"/>
</dbReference>
<dbReference type="Gene3D" id="3.40.50.800">
    <property type="entry name" value="Anticodon-binding domain"/>
    <property type="match status" value="1"/>
</dbReference>
<dbReference type="Gene3D" id="3.30.930.10">
    <property type="entry name" value="Bira Bifunctional Protein, Domain 2"/>
    <property type="match status" value="1"/>
</dbReference>
<dbReference type="Gene3D" id="3.30.980.10">
    <property type="entry name" value="Threonyl-trna Synthetase, Chain A, domain 2"/>
    <property type="match status" value="1"/>
</dbReference>
<dbReference type="HAMAP" id="MF_00184">
    <property type="entry name" value="Thr_tRNA_synth"/>
    <property type="match status" value="1"/>
</dbReference>
<dbReference type="InterPro" id="IPR002314">
    <property type="entry name" value="aa-tRNA-synt_IIb"/>
</dbReference>
<dbReference type="InterPro" id="IPR006195">
    <property type="entry name" value="aa-tRNA-synth_II"/>
</dbReference>
<dbReference type="InterPro" id="IPR045864">
    <property type="entry name" value="aa-tRNA-synth_II/BPL/LPL"/>
</dbReference>
<dbReference type="InterPro" id="IPR004154">
    <property type="entry name" value="Anticodon-bd"/>
</dbReference>
<dbReference type="InterPro" id="IPR036621">
    <property type="entry name" value="Anticodon-bd_dom_sf"/>
</dbReference>
<dbReference type="InterPro" id="IPR012675">
    <property type="entry name" value="Beta-grasp_dom_sf"/>
</dbReference>
<dbReference type="InterPro" id="IPR004095">
    <property type="entry name" value="TGS"/>
</dbReference>
<dbReference type="InterPro" id="IPR012676">
    <property type="entry name" value="TGS-like"/>
</dbReference>
<dbReference type="InterPro" id="IPR002320">
    <property type="entry name" value="Thr-tRNA-ligase_IIa"/>
</dbReference>
<dbReference type="InterPro" id="IPR018163">
    <property type="entry name" value="Thr/Ala-tRNA-synth_IIc_edit"/>
</dbReference>
<dbReference type="InterPro" id="IPR047246">
    <property type="entry name" value="ThrRS_anticodon"/>
</dbReference>
<dbReference type="InterPro" id="IPR033728">
    <property type="entry name" value="ThrRS_core"/>
</dbReference>
<dbReference type="InterPro" id="IPR012947">
    <property type="entry name" value="tRNA_SAD"/>
</dbReference>
<dbReference type="NCBIfam" id="TIGR00418">
    <property type="entry name" value="thrS"/>
    <property type="match status" value="1"/>
</dbReference>
<dbReference type="PANTHER" id="PTHR11451:SF36">
    <property type="entry name" value="THREONINE--TRNA LIGASE 1, CYTOPLASMIC"/>
    <property type="match status" value="1"/>
</dbReference>
<dbReference type="PANTHER" id="PTHR11451">
    <property type="entry name" value="THREONINE-TRNA LIGASE"/>
    <property type="match status" value="1"/>
</dbReference>
<dbReference type="Pfam" id="PF03129">
    <property type="entry name" value="HGTP_anticodon"/>
    <property type="match status" value="1"/>
</dbReference>
<dbReference type="Pfam" id="PF02824">
    <property type="entry name" value="TGS"/>
    <property type="match status" value="1"/>
</dbReference>
<dbReference type="Pfam" id="PF00587">
    <property type="entry name" value="tRNA-synt_2b"/>
    <property type="match status" value="1"/>
</dbReference>
<dbReference type="Pfam" id="PF07973">
    <property type="entry name" value="tRNA_SAD"/>
    <property type="match status" value="1"/>
</dbReference>
<dbReference type="PRINTS" id="PR01047">
    <property type="entry name" value="TRNASYNTHTHR"/>
</dbReference>
<dbReference type="SMART" id="SM00863">
    <property type="entry name" value="tRNA_SAD"/>
    <property type="match status" value="1"/>
</dbReference>
<dbReference type="SUPFAM" id="SSF52954">
    <property type="entry name" value="Class II aaRS ABD-related"/>
    <property type="match status" value="1"/>
</dbReference>
<dbReference type="SUPFAM" id="SSF55681">
    <property type="entry name" value="Class II aaRS and biotin synthetases"/>
    <property type="match status" value="1"/>
</dbReference>
<dbReference type="SUPFAM" id="SSF81271">
    <property type="entry name" value="TGS-like"/>
    <property type="match status" value="1"/>
</dbReference>
<dbReference type="SUPFAM" id="SSF55186">
    <property type="entry name" value="ThrRS/AlaRS common domain"/>
    <property type="match status" value="1"/>
</dbReference>
<dbReference type="PROSITE" id="PS50862">
    <property type="entry name" value="AA_TRNA_LIGASE_II"/>
    <property type="match status" value="1"/>
</dbReference>
<dbReference type="PROSITE" id="PS51880">
    <property type="entry name" value="TGS"/>
    <property type="match status" value="1"/>
</dbReference>
<comment type="function">
    <text evidence="2">Catalyzes the attachment of threonine to tRNA(Thr) in a two-step reaction: threonine is first activated by ATP to form Thr-AMP and then transferred to the acceptor end of tRNA(Thr). Also edits incorrectly charged tRNA(Thr) via its editing domain, at the post-transfer stage.</text>
</comment>
<comment type="catalytic activity">
    <reaction evidence="2">
        <text>tRNA(Thr) + L-threonine + ATP = L-threonyl-tRNA(Thr) + AMP + diphosphate + H(+)</text>
        <dbReference type="Rhea" id="RHEA:24624"/>
        <dbReference type="Rhea" id="RHEA-COMP:9670"/>
        <dbReference type="Rhea" id="RHEA-COMP:9704"/>
        <dbReference type="ChEBI" id="CHEBI:15378"/>
        <dbReference type="ChEBI" id="CHEBI:30616"/>
        <dbReference type="ChEBI" id="CHEBI:33019"/>
        <dbReference type="ChEBI" id="CHEBI:57926"/>
        <dbReference type="ChEBI" id="CHEBI:78442"/>
        <dbReference type="ChEBI" id="CHEBI:78534"/>
        <dbReference type="ChEBI" id="CHEBI:456215"/>
        <dbReference type="EC" id="6.1.1.3"/>
    </reaction>
</comment>
<comment type="subunit">
    <text evidence="1">Homodimer.</text>
</comment>
<comment type="subcellular location">
    <subcellularLocation>
        <location evidence="2">Cytoplasm</location>
    </subcellularLocation>
</comment>
<comment type="PTM">
    <text evidence="1">ISGylated.</text>
</comment>
<comment type="similarity">
    <text evidence="5">Belongs to the class-II aminoacyl-tRNA synthetase family.</text>
</comment>
<sequence>MSEEKASSPSGKMDGEKPLNPWPEYINTRLDMYHKLKAEHDSILAEKAAKDSKPIKVTLPDGKQVDAESWKTTPYQIACGISQGLADNTVVAKVNKVVWDLDRPLETDCTLELLKFEDEEAQAVYWHSSAHIMGEAMERVYGGCLCYGPPIENGFYYDMYLEEGGVSSNDFSSLETLCKKIIKEKQTFERLEVKKETLLEMFKYNKFKCRILNEKVNTPTTTVYRCGPLIDLCRGPHVRHTGKIKTLKIHKNSSTYWEGKADMETLQRIYGISFPDPKLLKEWEKFQEEAKNRDHRKIGRDQELYFFHELSPGSCFFLPKGAYIYNTLMEFIRSEYRKRGFQEVVTPNIFNSRLWMTSGHWQHYSENMFSFEVEKEQFALKPMNCPGHCLMFDHRPRSWRELPLRLADFGVLHRNELSGALTGLTRVRRFQQDDAHIFCAMEQIEDEIKGCLDFLRTVYSVFGFSFKLNLSTRPEKFLGDIEIWNQAEKQLENSLNEFGEKWELNPGDGAFYGPKIDIQIKDAIGRYHQCATIQLDFQLPIRFNLTYVSHDGDDKKRPVIVHRAILGSVERMIAILTENYGGKWPFWLSPRQVMVVPVGPTCDEYAQKVRQEFHDAKFMVDIDLDPGCTLNKKIRNAQLAQYNFILVVGEKEKASGTVNIRTRDNKVHGERTVGETVERLQQLKQLRSKQAEEEF</sequence>
<keyword id="KW-0007">Acetylation</keyword>
<keyword id="KW-0030">Aminoacyl-tRNA synthetase</keyword>
<keyword id="KW-0067">ATP-binding</keyword>
<keyword id="KW-0963">Cytoplasm</keyword>
<keyword id="KW-0436">Ligase</keyword>
<keyword id="KW-0547">Nucleotide-binding</keyword>
<keyword id="KW-0597">Phosphoprotein</keyword>
<keyword id="KW-0648">Protein biosynthesis</keyword>
<keyword id="KW-1185">Reference proteome</keyword>
<keyword id="KW-0832">Ubl conjugation</keyword>
<feature type="chain" id="PRO_0000101121" description="Threonine--tRNA ligase 1, cytoplasmic">
    <location>
        <begin position="1"/>
        <end position="695"/>
    </location>
</feature>
<feature type="domain" description="TGS" evidence="3">
    <location>
        <begin position="51"/>
        <end position="115"/>
    </location>
</feature>
<feature type="region of interest" description="Disordered" evidence="4">
    <location>
        <begin position="1"/>
        <end position="21"/>
    </location>
</feature>
<feature type="modified residue" description="N6-acetyllysine" evidence="1">
    <location>
        <position position="215"/>
    </location>
</feature>
<feature type="modified residue" description="Phosphothreonine" evidence="1">
    <location>
        <position position="218"/>
    </location>
</feature>
<feature type="modified residue" description="Phosphotyrosine" evidence="6">
    <location>
        <position position="270"/>
    </location>
</feature>
<feature type="modified residue" description="Phosphothreonine" evidence="1">
    <location>
        <position position="425"/>
    </location>
</feature>
<organism>
    <name type="scientific">Rattus norvegicus</name>
    <name type="common">Rat</name>
    <dbReference type="NCBI Taxonomy" id="10116"/>
    <lineage>
        <taxon>Eukaryota</taxon>
        <taxon>Metazoa</taxon>
        <taxon>Chordata</taxon>
        <taxon>Craniata</taxon>
        <taxon>Vertebrata</taxon>
        <taxon>Euteleostomi</taxon>
        <taxon>Mammalia</taxon>
        <taxon>Eutheria</taxon>
        <taxon>Euarchontoglires</taxon>
        <taxon>Glires</taxon>
        <taxon>Rodentia</taxon>
        <taxon>Myomorpha</taxon>
        <taxon>Muroidea</taxon>
        <taxon>Muridae</taxon>
        <taxon>Murinae</taxon>
        <taxon>Rattus</taxon>
    </lineage>
</organism>
<protein>
    <recommendedName>
        <fullName>Threonine--tRNA ligase 1, cytoplasmic</fullName>
        <ecNumber evidence="2">6.1.1.3</ecNumber>
    </recommendedName>
    <alternativeName>
        <fullName>Threonine--tRNA ligase, cytoplasmic</fullName>
    </alternativeName>
    <alternativeName>
        <fullName>Threonyl-tRNA synthetase</fullName>
        <shortName>ThrRS</shortName>
    </alternativeName>
    <alternativeName>
        <fullName>Threonyl-tRNA synthetase 1</fullName>
    </alternativeName>
</protein>
<reference key="1">
    <citation type="journal article" date="2004" name="Genome Res.">
        <title>The status, quality, and expansion of the NIH full-length cDNA project: the Mammalian Gene Collection (MGC).</title>
        <authorList>
            <consortium name="The MGC Project Team"/>
        </authorList>
    </citation>
    <scope>NUCLEOTIDE SEQUENCE [LARGE SCALE MRNA]</scope>
    <source>
        <tissue>Testis</tissue>
    </source>
</reference>
<reference key="2">
    <citation type="journal article" date="2012" name="Nat. Commun.">
        <title>Quantitative maps of protein phosphorylation sites across 14 different rat organs and tissues.</title>
        <authorList>
            <person name="Lundby A."/>
            <person name="Secher A."/>
            <person name="Lage K."/>
            <person name="Nordsborg N.B."/>
            <person name="Dmytriyev A."/>
            <person name="Lundby C."/>
            <person name="Olsen J.V."/>
        </authorList>
    </citation>
    <scope>PHOSPHORYLATION [LARGE SCALE ANALYSIS] AT TYR-270</scope>
    <scope>IDENTIFICATION BY MASS SPECTROMETRY [LARGE SCALE ANALYSIS]</scope>
</reference>
<proteinExistence type="evidence at protein level"/>
<evidence type="ECO:0000250" key="1">
    <source>
        <dbReference type="UniProtKB" id="P26639"/>
    </source>
</evidence>
<evidence type="ECO:0000250" key="2">
    <source>
        <dbReference type="UniProtKB" id="Q9D0R2"/>
    </source>
</evidence>
<evidence type="ECO:0000255" key="3">
    <source>
        <dbReference type="PROSITE-ProRule" id="PRU01228"/>
    </source>
</evidence>
<evidence type="ECO:0000256" key="4">
    <source>
        <dbReference type="SAM" id="MobiDB-lite"/>
    </source>
</evidence>
<evidence type="ECO:0000305" key="5"/>
<evidence type="ECO:0007744" key="6">
    <source>
    </source>
</evidence>
<accession>Q5XHY5</accession>
<gene>
    <name type="primary">Tars1</name>
    <name type="synonym">Tars</name>
</gene>
<name>SYTC_RAT</name>